<sequence>MAETKVILTKSVNHLGHPGDVVAVKSGYARNYLFPQGLAFAWSKGAAAQIEAMKRARLAKAVATREEAVAAKEIIEGSTVEIAAKVSESGKLFGGISAEKIAIALSSKVEVNPKNITVEPIKTTGDFPATVALHPEITANFFVKVVAE</sequence>
<keyword id="KW-1185">Reference proteome</keyword>
<keyword id="KW-0687">Ribonucleoprotein</keyword>
<keyword id="KW-0689">Ribosomal protein</keyword>
<keyword id="KW-0694">RNA-binding</keyword>
<keyword id="KW-0699">rRNA-binding</keyword>
<comment type="function">
    <text evidence="1">Binds to the 23S rRNA.</text>
</comment>
<comment type="similarity">
    <text evidence="1">Belongs to the bacterial ribosomal protein bL9 family.</text>
</comment>
<name>RL9_BIFAA</name>
<feature type="chain" id="PRO_1000014743" description="Large ribosomal subunit protein bL9">
    <location>
        <begin position="1"/>
        <end position="148"/>
    </location>
</feature>
<proteinExistence type="inferred from homology"/>
<reference key="1">
    <citation type="submission" date="2006-12" db="EMBL/GenBank/DDBJ databases">
        <title>Bifidobacterium adolescentis complete genome sequence.</title>
        <authorList>
            <person name="Suzuki T."/>
            <person name="Tsuda Y."/>
            <person name="Kanou N."/>
            <person name="Inoue T."/>
            <person name="Kumazaki K."/>
            <person name="Nagano S."/>
            <person name="Hirai S."/>
            <person name="Tanaka K."/>
            <person name="Watanabe K."/>
        </authorList>
    </citation>
    <scope>NUCLEOTIDE SEQUENCE [LARGE SCALE GENOMIC DNA]</scope>
    <source>
        <strain>ATCC 15703 / DSM 20083 / NCTC 11814 / E194a</strain>
    </source>
</reference>
<protein>
    <recommendedName>
        <fullName evidence="1">Large ribosomal subunit protein bL9</fullName>
    </recommendedName>
    <alternativeName>
        <fullName evidence="2">50S ribosomal protein L9</fullName>
    </alternativeName>
</protein>
<dbReference type="EMBL" id="AP009256">
    <property type="protein sequence ID" value="BAF40261.1"/>
    <property type="molecule type" value="Genomic_DNA"/>
</dbReference>
<dbReference type="RefSeq" id="WP_003810110.1">
    <property type="nucleotide sequence ID" value="NZ_CAXVNC010000003.1"/>
</dbReference>
<dbReference type="SMR" id="A1A3H8"/>
<dbReference type="STRING" id="367928.BAD_1480"/>
<dbReference type="PaxDb" id="1680-BADO_1538"/>
<dbReference type="GeneID" id="4556676"/>
<dbReference type="KEGG" id="bad:BAD_1480"/>
<dbReference type="HOGENOM" id="CLU_078938_5_1_11"/>
<dbReference type="Proteomes" id="UP000008702">
    <property type="component" value="Chromosome"/>
</dbReference>
<dbReference type="GO" id="GO:1990904">
    <property type="term" value="C:ribonucleoprotein complex"/>
    <property type="evidence" value="ECO:0007669"/>
    <property type="project" value="UniProtKB-KW"/>
</dbReference>
<dbReference type="GO" id="GO:0005840">
    <property type="term" value="C:ribosome"/>
    <property type="evidence" value="ECO:0007669"/>
    <property type="project" value="UniProtKB-KW"/>
</dbReference>
<dbReference type="GO" id="GO:0019843">
    <property type="term" value="F:rRNA binding"/>
    <property type="evidence" value="ECO:0007669"/>
    <property type="project" value="UniProtKB-UniRule"/>
</dbReference>
<dbReference type="GO" id="GO:0003735">
    <property type="term" value="F:structural constituent of ribosome"/>
    <property type="evidence" value="ECO:0007669"/>
    <property type="project" value="InterPro"/>
</dbReference>
<dbReference type="GO" id="GO:0006412">
    <property type="term" value="P:translation"/>
    <property type="evidence" value="ECO:0007669"/>
    <property type="project" value="UniProtKB-UniRule"/>
</dbReference>
<dbReference type="FunFam" id="3.40.5.10:FF:000003">
    <property type="entry name" value="50S ribosomal protein L9"/>
    <property type="match status" value="1"/>
</dbReference>
<dbReference type="Gene3D" id="3.10.430.100">
    <property type="entry name" value="Ribosomal protein L9, C-terminal domain"/>
    <property type="match status" value="1"/>
</dbReference>
<dbReference type="Gene3D" id="3.40.5.10">
    <property type="entry name" value="Ribosomal protein L9, N-terminal domain"/>
    <property type="match status" value="1"/>
</dbReference>
<dbReference type="HAMAP" id="MF_00503">
    <property type="entry name" value="Ribosomal_bL9"/>
    <property type="match status" value="1"/>
</dbReference>
<dbReference type="InterPro" id="IPR000244">
    <property type="entry name" value="Ribosomal_bL9"/>
</dbReference>
<dbReference type="InterPro" id="IPR009027">
    <property type="entry name" value="Ribosomal_bL9/RNase_H1_N"/>
</dbReference>
<dbReference type="InterPro" id="IPR020594">
    <property type="entry name" value="Ribosomal_bL9_bac/chp"/>
</dbReference>
<dbReference type="InterPro" id="IPR020069">
    <property type="entry name" value="Ribosomal_bL9_C"/>
</dbReference>
<dbReference type="InterPro" id="IPR036791">
    <property type="entry name" value="Ribosomal_bL9_C_sf"/>
</dbReference>
<dbReference type="InterPro" id="IPR020070">
    <property type="entry name" value="Ribosomal_bL9_N"/>
</dbReference>
<dbReference type="InterPro" id="IPR036935">
    <property type="entry name" value="Ribosomal_bL9_N_sf"/>
</dbReference>
<dbReference type="NCBIfam" id="TIGR00158">
    <property type="entry name" value="L9"/>
    <property type="match status" value="1"/>
</dbReference>
<dbReference type="PANTHER" id="PTHR21368">
    <property type="entry name" value="50S RIBOSOMAL PROTEIN L9"/>
    <property type="match status" value="1"/>
</dbReference>
<dbReference type="Pfam" id="PF03948">
    <property type="entry name" value="Ribosomal_L9_C"/>
    <property type="match status" value="1"/>
</dbReference>
<dbReference type="Pfam" id="PF01281">
    <property type="entry name" value="Ribosomal_L9_N"/>
    <property type="match status" value="1"/>
</dbReference>
<dbReference type="SUPFAM" id="SSF55658">
    <property type="entry name" value="L9 N-domain-like"/>
    <property type="match status" value="1"/>
</dbReference>
<dbReference type="SUPFAM" id="SSF55653">
    <property type="entry name" value="Ribosomal protein L9 C-domain"/>
    <property type="match status" value="1"/>
</dbReference>
<dbReference type="PROSITE" id="PS00651">
    <property type="entry name" value="RIBOSOMAL_L9"/>
    <property type="match status" value="1"/>
</dbReference>
<gene>
    <name evidence="1" type="primary">rplI</name>
    <name type="ordered locus">BAD_1480</name>
</gene>
<organism>
    <name type="scientific">Bifidobacterium adolescentis (strain ATCC 15703 / DSM 20083 / NCTC 11814 / E194a)</name>
    <dbReference type="NCBI Taxonomy" id="367928"/>
    <lineage>
        <taxon>Bacteria</taxon>
        <taxon>Bacillati</taxon>
        <taxon>Actinomycetota</taxon>
        <taxon>Actinomycetes</taxon>
        <taxon>Bifidobacteriales</taxon>
        <taxon>Bifidobacteriaceae</taxon>
        <taxon>Bifidobacterium</taxon>
    </lineage>
</organism>
<accession>A1A3H8</accession>
<evidence type="ECO:0000255" key="1">
    <source>
        <dbReference type="HAMAP-Rule" id="MF_00503"/>
    </source>
</evidence>
<evidence type="ECO:0000305" key="2"/>